<sequence length="187" mass="21801">MNYFDNKIDQFATYLQKRNNLDHIQFLQVRLGMQVLAKNIGKLIVMYTLAYILNIFIFTLITNISFYLIRRYAHGAHAPSSFWCYIESITLFIVLPLLVLHFHINETLMMFLALLSVGVVIKYAPAATKKKPIPARLVKQKRYFSIIISTILFIITLFVKEPYTQFIQLGIIIQAITLLPIYYSKED</sequence>
<protein>
    <recommendedName>
        <fullName evidence="1">Accessory gene regulator protein B</fullName>
        <ecNumber evidence="1">3.4.-.-</ecNumber>
    </recommendedName>
</protein>
<dbReference type="EC" id="3.4.-.-" evidence="1"/>
<dbReference type="EMBL" id="BX571856">
    <property type="protein sequence ID" value="CAG41104.1"/>
    <property type="molecule type" value="Genomic_DNA"/>
</dbReference>
<dbReference type="RefSeq" id="WP_001105709.1">
    <property type="nucleotide sequence ID" value="NC_002952.2"/>
</dbReference>
<dbReference type="MEROPS" id="C75.001"/>
<dbReference type="KEGG" id="sar:SAR2123"/>
<dbReference type="HOGENOM" id="CLU_098969_2_2_9"/>
<dbReference type="Proteomes" id="UP000000596">
    <property type="component" value="Chromosome"/>
</dbReference>
<dbReference type="GO" id="GO:0005886">
    <property type="term" value="C:plasma membrane"/>
    <property type="evidence" value="ECO:0007669"/>
    <property type="project" value="UniProtKB-SubCell"/>
</dbReference>
<dbReference type="GO" id="GO:0008233">
    <property type="term" value="F:peptidase activity"/>
    <property type="evidence" value="ECO:0007669"/>
    <property type="project" value="UniProtKB-UniRule"/>
</dbReference>
<dbReference type="GO" id="GO:0006508">
    <property type="term" value="P:proteolysis"/>
    <property type="evidence" value="ECO:0007669"/>
    <property type="project" value="UniProtKB-KW"/>
</dbReference>
<dbReference type="GO" id="GO:0009372">
    <property type="term" value="P:quorum sensing"/>
    <property type="evidence" value="ECO:0007669"/>
    <property type="project" value="UniProtKB-UniRule"/>
</dbReference>
<dbReference type="HAMAP" id="MF_00784">
    <property type="entry name" value="AgrB"/>
    <property type="match status" value="1"/>
</dbReference>
<dbReference type="InterPro" id="IPR006741">
    <property type="entry name" value="AgrB"/>
</dbReference>
<dbReference type="Pfam" id="PF04647">
    <property type="entry name" value="AgrB"/>
    <property type="match status" value="1"/>
</dbReference>
<dbReference type="SMART" id="SM00793">
    <property type="entry name" value="AgrB"/>
    <property type="match status" value="1"/>
</dbReference>
<organism>
    <name type="scientific">Staphylococcus aureus (strain MRSA252)</name>
    <dbReference type="NCBI Taxonomy" id="282458"/>
    <lineage>
        <taxon>Bacteria</taxon>
        <taxon>Bacillati</taxon>
        <taxon>Bacillota</taxon>
        <taxon>Bacilli</taxon>
        <taxon>Bacillales</taxon>
        <taxon>Staphylococcaceae</taxon>
        <taxon>Staphylococcus</taxon>
    </lineage>
</organism>
<accession>Q6GF36</accession>
<name>AGRB_STAAR</name>
<reference key="1">
    <citation type="journal article" date="2004" name="Proc. Natl. Acad. Sci. U.S.A.">
        <title>Complete genomes of two clinical Staphylococcus aureus strains: evidence for the rapid evolution of virulence and drug resistance.</title>
        <authorList>
            <person name="Holden M.T.G."/>
            <person name="Feil E.J."/>
            <person name="Lindsay J.A."/>
            <person name="Peacock S.J."/>
            <person name="Day N.P.J."/>
            <person name="Enright M.C."/>
            <person name="Foster T.J."/>
            <person name="Moore C.E."/>
            <person name="Hurst L."/>
            <person name="Atkin R."/>
            <person name="Barron A."/>
            <person name="Bason N."/>
            <person name="Bentley S.D."/>
            <person name="Chillingworth C."/>
            <person name="Chillingworth T."/>
            <person name="Churcher C."/>
            <person name="Clark L."/>
            <person name="Corton C."/>
            <person name="Cronin A."/>
            <person name="Doggett J."/>
            <person name="Dowd L."/>
            <person name="Feltwell T."/>
            <person name="Hance Z."/>
            <person name="Harris B."/>
            <person name="Hauser H."/>
            <person name="Holroyd S."/>
            <person name="Jagels K."/>
            <person name="James K.D."/>
            <person name="Lennard N."/>
            <person name="Line A."/>
            <person name="Mayes R."/>
            <person name="Moule S."/>
            <person name="Mungall K."/>
            <person name="Ormond D."/>
            <person name="Quail M.A."/>
            <person name="Rabbinowitsch E."/>
            <person name="Rutherford K.M."/>
            <person name="Sanders M."/>
            <person name="Sharp S."/>
            <person name="Simmonds M."/>
            <person name="Stevens K."/>
            <person name="Whitehead S."/>
            <person name="Barrell B.G."/>
            <person name="Spratt B.G."/>
            <person name="Parkhill J."/>
        </authorList>
    </citation>
    <scope>NUCLEOTIDE SEQUENCE [LARGE SCALE GENOMIC DNA]</scope>
    <source>
        <strain>MRSA252</strain>
    </source>
</reference>
<feature type="chain" id="PRO_0000168122" description="Accessory gene regulator protein B">
    <location>
        <begin position="1"/>
        <end position="187"/>
    </location>
</feature>
<feature type="transmembrane region" description="Helical" evidence="1">
    <location>
        <begin position="49"/>
        <end position="69"/>
    </location>
</feature>
<feature type="transmembrane region" description="Helical" evidence="1">
    <location>
        <begin position="82"/>
        <end position="102"/>
    </location>
</feature>
<feature type="transmembrane region" description="Helical" evidence="1">
    <location>
        <begin position="107"/>
        <end position="127"/>
    </location>
</feature>
<feature type="transmembrane region" description="Helical" evidence="1">
    <location>
        <begin position="143"/>
        <end position="163"/>
    </location>
</feature>
<feature type="transmembrane region" description="Helical" evidence="1">
    <location>
        <begin position="164"/>
        <end position="184"/>
    </location>
</feature>
<comment type="function">
    <text evidence="1">Essential for the production of a quorum sensing system signal molecule, the autoinducing peptide (AIP). This quorum sensing system is responsible for the regulation of the expression of virulence factor genes. Involved in the proteolytic processing of AgrD, the precursor of AIP.</text>
</comment>
<comment type="subcellular location">
    <subcellularLocation>
        <location evidence="1">Cell membrane</location>
        <topology evidence="1">Multi-pass membrane protein</topology>
    </subcellularLocation>
</comment>
<comment type="similarity">
    <text evidence="1">Belongs to the AgrB family.</text>
</comment>
<keyword id="KW-1003">Cell membrane</keyword>
<keyword id="KW-0378">Hydrolase</keyword>
<keyword id="KW-0472">Membrane</keyword>
<keyword id="KW-0645">Protease</keyword>
<keyword id="KW-0673">Quorum sensing</keyword>
<keyword id="KW-0812">Transmembrane</keyword>
<keyword id="KW-1133">Transmembrane helix</keyword>
<keyword id="KW-0843">Virulence</keyword>
<proteinExistence type="inferred from homology"/>
<evidence type="ECO:0000255" key="1">
    <source>
        <dbReference type="HAMAP-Rule" id="MF_00784"/>
    </source>
</evidence>
<gene>
    <name evidence="1" type="primary">agrB</name>
    <name type="ordered locus">SAR2123</name>
</gene>